<dbReference type="EC" id="3.4.23.1"/>
<dbReference type="EMBL" id="X59752">
    <property type="protein sequence ID" value="CAA42424.1"/>
    <property type="molecule type" value="Genomic_DNA"/>
</dbReference>
<dbReference type="PIR" id="S19681">
    <property type="entry name" value="PEMQAJ"/>
</dbReference>
<dbReference type="SMR" id="P03954"/>
<dbReference type="MEROPS" id="A01.001"/>
<dbReference type="iPTMnet" id="P03954"/>
<dbReference type="GO" id="GO:0070062">
    <property type="term" value="C:extracellular exosome"/>
    <property type="evidence" value="ECO:0007669"/>
    <property type="project" value="TreeGrafter"/>
</dbReference>
<dbReference type="GO" id="GO:0004190">
    <property type="term" value="F:aspartic-type endopeptidase activity"/>
    <property type="evidence" value="ECO:0007669"/>
    <property type="project" value="UniProtKB-KW"/>
</dbReference>
<dbReference type="GO" id="GO:0007586">
    <property type="term" value="P:digestion"/>
    <property type="evidence" value="ECO:0007669"/>
    <property type="project" value="UniProtKB-KW"/>
</dbReference>
<dbReference type="GO" id="GO:0006508">
    <property type="term" value="P:proteolysis"/>
    <property type="evidence" value="ECO:0007669"/>
    <property type="project" value="UniProtKB-KW"/>
</dbReference>
<dbReference type="CDD" id="cd05478">
    <property type="entry name" value="pepsin_A"/>
    <property type="match status" value="1"/>
</dbReference>
<dbReference type="FunFam" id="2.40.70.10:FF:000006">
    <property type="entry name" value="Cathepsin E"/>
    <property type="match status" value="1"/>
</dbReference>
<dbReference type="FunFam" id="2.40.70.10:FF:000004">
    <property type="entry name" value="Pepsin A"/>
    <property type="match status" value="1"/>
</dbReference>
<dbReference type="Gene3D" id="6.10.140.60">
    <property type="match status" value="1"/>
</dbReference>
<dbReference type="Gene3D" id="2.40.70.10">
    <property type="entry name" value="Acid Proteases"/>
    <property type="match status" value="2"/>
</dbReference>
<dbReference type="InterPro" id="IPR001461">
    <property type="entry name" value="Aspartic_peptidase_A1"/>
</dbReference>
<dbReference type="InterPro" id="IPR001969">
    <property type="entry name" value="Aspartic_peptidase_AS"/>
</dbReference>
<dbReference type="InterPro" id="IPR012848">
    <property type="entry name" value="Aspartic_peptidase_N"/>
</dbReference>
<dbReference type="InterPro" id="IPR034162">
    <property type="entry name" value="Pepsin_A"/>
</dbReference>
<dbReference type="InterPro" id="IPR033121">
    <property type="entry name" value="PEPTIDASE_A1"/>
</dbReference>
<dbReference type="InterPro" id="IPR021109">
    <property type="entry name" value="Peptidase_aspartic_dom_sf"/>
</dbReference>
<dbReference type="PANTHER" id="PTHR47966">
    <property type="entry name" value="BETA-SITE APP-CLEAVING ENZYME, ISOFORM A-RELATED"/>
    <property type="match status" value="1"/>
</dbReference>
<dbReference type="PANTHER" id="PTHR47966:SF22">
    <property type="entry name" value="PEPSIN A-3-RELATED"/>
    <property type="match status" value="1"/>
</dbReference>
<dbReference type="Pfam" id="PF07966">
    <property type="entry name" value="A1_Propeptide"/>
    <property type="match status" value="1"/>
</dbReference>
<dbReference type="Pfam" id="PF00026">
    <property type="entry name" value="Asp"/>
    <property type="match status" value="1"/>
</dbReference>
<dbReference type="PRINTS" id="PR00792">
    <property type="entry name" value="PEPSIN"/>
</dbReference>
<dbReference type="SUPFAM" id="SSF50630">
    <property type="entry name" value="Acid proteases"/>
    <property type="match status" value="1"/>
</dbReference>
<dbReference type="PROSITE" id="PS00141">
    <property type="entry name" value="ASP_PROTEASE"/>
    <property type="match status" value="2"/>
</dbReference>
<dbReference type="PROSITE" id="PS51767">
    <property type="entry name" value="PEPTIDASE_A1"/>
    <property type="match status" value="1"/>
</dbReference>
<name>PEPA1_MACFU</name>
<comment type="function">
    <text>Shows particularly broad specificity; although bonds involving phenylalanine and leucine are preferred, many others are also cleaved to some extent.</text>
</comment>
<comment type="catalytic activity">
    <reaction evidence="2">
        <text>Preferential cleavage: hydrophobic, preferably aromatic, residues in P1 and P1' positions. Cleaves 1-Phe-|-Val-2, 4-Gln-|-His-5, 13-Glu-|-Ala-14, 14-Ala-|-Leu-15, 15-Leu-|-Tyr-16, 16-Tyr-|-Leu-17, 23-Gly-|-Phe-24, 24-Phe-|-Phe-25 and 25-Phe-|-Tyr-26 bonds in the B chain of insulin.</text>
        <dbReference type="EC" id="3.4.23.1"/>
    </reaction>
</comment>
<comment type="subcellular location">
    <subcellularLocation>
        <location>Secreted</location>
    </subcellularLocation>
</comment>
<comment type="developmental stage">
    <text>Predominant at the juvenile and adult stages.</text>
</comment>
<comment type="PTM">
    <text>Each pepsinogen is converted to corresponding pepsin at pH 2.0 in part as a result of the release of a 47 AA activation segment and in part as a result of stepwise proteolytic cleavage via an intermediate form(s).</text>
</comment>
<comment type="miscellaneous">
    <text>The expression of pepsinogen genes is regulated by hormones and related substances.</text>
</comment>
<comment type="similarity">
    <text evidence="6">Belongs to the peptidase A1 family.</text>
</comment>
<sequence length="388" mass="41624">MKWLLLLGLVALSECIIYKVPLVRKKSLRRNLSEHGLLKDFLKKHNLNPASKYFPQAEAPTLIDEQPLENYLDVEYFGTIGIGTPAQDFTVIFDTGSSNLWVPSVYCSSLACTNHNLFNPQDSSTYQSTSGTLSITYGTGSMTGILGYDTVQVGGISDTNQIFGLSETEPGSFLYYAPFDGILGLAYPSISSSGATPVFDNIWDQGLVSQDLFSVYLSADDQSGSVVIFGGIDSSYYTGSLNWVPVSVEGYWQISVDSITMNGEAIACAEGCQAIVDTGTSLLTGPTSPIANIQSDIGASENSDGEMVVSCSAISSLPDIVFTINGIQYPVPPSAYILQSQGSCTSGFQGMDVPTESGELWILGDVFIRQYFTVFDRANNQVGLAPVA</sequence>
<reference key="1">
    <citation type="journal article" date="1991" name="Eur. J. Biochem.">
        <title>Development-dependent expression of isozymogens of monkey pepsinogens and structural differences between them.</title>
        <authorList>
            <person name="Kageyama T."/>
            <person name="Tanabe K."/>
            <person name="Koiwai O."/>
        </authorList>
    </citation>
    <scope>NUCLEOTIDE SEQUENCE [GENOMIC DNA]</scope>
    <scope>PROTEIN SEQUENCE OF 16-70</scope>
    <source>
        <tissue>Gastric mucosa</tissue>
    </source>
</reference>
<reference key="2">
    <citation type="journal article" date="1980" name="J. Biochem.">
        <title>Monkey pepsinogens and pepsins. IV. The amino acid sequence of the activation peptide segment of Japanese monkey pepsinogen.</title>
        <authorList>
            <person name="Kageyama T."/>
            <person name="Takahashi K."/>
        </authorList>
    </citation>
    <scope>PROTEIN SEQUENCE OF 16-62</scope>
</reference>
<reference key="3">
    <citation type="journal article" date="1986" name="J. Biol. Chem.">
        <title>The complete amino acid sequence of monkey pepsinogen A.</title>
        <authorList>
            <person name="Kageyama T."/>
            <person name="Takahashi K."/>
        </authorList>
    </citation>
    <scope>PROTEIN SEQUENCE OF 41-388</scope>
    <scope>PHOSPHORYLATION AT SER-130</scope>
    <scope>DISULFIDE BONDS</scope>
</reference>
<accession>P03954</accession>
<evidence type="ECO:0000255" key="1">
    <source>
        <dbReference type="PROSITE-ProRule" id="PRU01103"/>
    </source>
</evidence>
<evidence type="ECO:0000255" key="2">
    <source>
        <dbReference type="PROSITE-ProRule" id="PRU10094"/>
    </source>
</evidence>
<evidence type="ECO:0000269" key="3">
    <source>
    </source>
</evidence>
<evidence type="ECO:0000269" key="4">
    <source>
    </source>
</evidence>
<evidence type="ECO:0000269" key="5">
    <source>
    </source>
</evidence>
<evidence type="ECO:0000305" key="6"/>
<feature type="signal peptide" evidence="3 5">
    <location>
        <begin position="1"/>
        <end position="15"/>
    </location>
</feature>
<feature type="propeptide" id="PRO_0000026015" description="Activation peptide" evidence="4">
    <location>
        <begin position="16"/>
        <end position="40"/>
    </location>
</feature>
<feature type="propeptide" id="PRO_0000026016" description="Activation peptide">
    <location>
        <begin position="41"/>
        <end position="62"/>
    </location>
</feature>
<feature type="chain" id="PRO_0000026017" description="Pepsin A-1">
    <location>
        <begin position="63"/>
        <end position="388"/>
    </location>
</feature>
<feature type="domain" description="Peptidase A1" evidence="1">
    <location>
        <begin position="76"/>
        <end position="385"/>
    </location>
</feature>
<feature type="active site">
    <location>
        <position position="94"/>
    </location>
</feature>
<feature type="active site">
    <location>
        <position position="277"/>
    </location>
</feature>
<feature type="modified residue" description="Phosphoserine" evidence="4">
    <location>
        <position position="130"/>
    </location>
</feature>
<feature type="disulfide bond" evidence="4">
    <location>
        <begin position="107"/>
        <end position="112"/>
    </location>
</feature>
<feature type="disulfide bond" evidence="4">
    <location>
        <begin position="268"/>
        <end position="272"/>
    </location>
</feature>
<feature type="disulfide bond" evidence="4">
    <location>
        <begin position="311"/>
        <end position="344"/>
    </location>
</feature>
<feature type="sequence conflict" description="In Ref. 3; AA sequence." evidence="6" ref="3">
    <original>N</original>
    <variation>D</variation>
    <location>
        <position position="262"/>
    </location>
</feature>
<proteinExistence type="evidence at protein level"/>
<organism>
    <name type="scientific">Macaca fuscata fuscata</name>
    <name type="common">Japanese macaque</name>
    <dbReference type="NCBI Taxonomy" id="9543"/>
    <lineage>
        <taxon>Eukaryota</taxon>
        <taxon>Metazoa</taxon>
        <taxon>Chordata</taxon>
        <taxon>Craniata</taxon>
        <taxon>Vertebrata</taxon>
        <taxon>Euteleostomi</taxon>
        <taxon>Mammalia</taxon>
        <taxon>Eutheria</taxon>
        <taxon>Euarchontoglires</taxon>
        <taxon>Primates</taxon>
        <taxon>Haplorrhini</taxon>
        <taxon>Catarrhini</taxon>
        <taxon>Cercopithecidae</taxon>
        <taxon>Cercopithecinae</taxon>
        <taxon>Macaca</taxon>
    </lineage>
</organism>
<protein>
    <recommendedName>
        <fullName>Pepsin A-1</fullName>
        <ecNumber>3.4.23.1</ecNumber>
    </recommendedName>
    <alternativeName>
        <fullName>Pepsin III-3</fullName>
    </alternativeName>
</protein>
<keyword id="KW-0064">Aspartyl protease</keyword>
<keyword id="KW-0222">Digestion</keyword>
<keyword id="KW-0903">Direct protein sequencing</keyword>
<keyword id="KW-1015">Disulfide bond</keyword>
<keyword id="KW-0378">Hydrolase</keyword>
<keyword id="KW-0597">Phosphoprotein</keyword>
<keyword id="KW-0645">Protease</keyword>
<keyword id="KW-0964">Secreted</keyword>
<keyword id="KW-0732">Signal</keyword>
<keyword id="KW-0865">Zymogen</keyword>
<gene>
    <name type="primary">PGA</name>
</gene>